<gene>
    <name type="primary">znf750</name>
    <name type="ORF">TNeu069m12.1</name>
</gene>
<accession>Q28BT7</accession>
<accession>Q6DIF8</accession>
<reference key="1">
    <citation type="submission" date="2006-03" db="EMBL/GenBank/DDBJ databases">
        <authorList>
            <consortium name="Sanger Xenopus tropicalis EST/cDNA project"/>
        </authorList>
    </citation>
    <scope>NUCLEOTIDE SEQUENCE [LARGE SCALE MRNA]</scope>
    <source>
        <tissue>Neurula</tissue>
    </source>
</reference>
<reference key="2">
    <citation type="submission" date="2004-06" db="EMBL/GenBank/DDBJ databases">
        <authorList>
            <consortium name="NIH - Xenopus Gene Collection (XGC) project"/>
        </authorList>
    </citation>
    <scope>NUCLEOTIDE SEQUENCE [LARGE SCALE MRNA]</scope>
    <source>
        <tissue>Embryo</tissue>
    </source>
</reference>
<dbReference type="EMBL" id="CR942644">
    <property type="protein sequence ID" value="CAJ82741.1"/>
    <property type="molecule type" value="mRNA"/>
</dbReference>
<dbReference type="EMBL" id="BC075584">
    <property type="protein sequence ID" value="AAH75584.1"/>
    <property type="molecule type" value="mRNA"/>
</dbReference>
<dbReference type="RefSeq" id="NP_001004995.1">
    <property type="nucleotide sequence ID" value="NM_001004995.1"/>
</dbReference>
<dbReference type="SMR" id="Q28BT7"/>
<dbReference type="FunCoup" id="Q28BT7">
    <property type="interactions" value="614"/>
</dbReference>
<dbReference type="STRING" id="8364.ENSXETP00000026768"/>
<dbReference type="PaxDb" id="8364-ENSXETP00000044280"/>
<dbReference type="DNASU" id="448470"/>
<dbReference type="GeneID" id="448470"/>
<dbReference type="KEGG" id="xtr:448470"/>
<dbReference type="AGR" id="Xenbase:XB-GENE-5775684"/>
<dbReference type="CTD" id="79755"/>
<dbReference type="Xenbase" id="XB-GENE-5775684">
    <property type="gene designation" value="znf750"/>
</dbReference>
<dbReference type="eggNOG" id="ENOG502QU7X">
    <property type="taxonomic scope" value="Eukaryota"/>
</dbReference>
<dbReference type="HOGENOM" id="CLU_023455_0_0_1"/>
<dbReference type="InParanoid" id="Q28BT7"/>
<dbReference type="OMA" id="PSAYDHY"/>
<dbReference type="OrthoDB" id="8933073at2759"/>
<dbReference type="PhylomeDB" id="Q28BT7"/>
<dbReference type="TreeFam" id="TF331381"/>
<dbReference type="Proteomes" id="UP000008143">
    <property type="component" value="Chromosome 10"/>
</dbReference>
<dbReference type="Bgee" id="ENSXETG00000020479">
    <property type="expression patterns" value="Expressed in gastrula and 7 other cell types or tissues"/>
</dbReference>
<dbReference type="GO" id="GO:0005634">
    <property type="term" value="C:nucleus"/>
    <property type="evidence" value="ECO:0000250"/>
    <property type="project" value="UniProtKB"/>
</dbReference>
<dbReference type="GO" id="GO:0001228">
    <property type="term" value="F:DNA-binding transcription activator activity, RNA polymerase II-specific"/>
    <property type="evidence" value="ECO:0000250"/>
    <property type="project" value="UniProtKB"/>
</dbReference>
<dbReference type="GO" id="GO:1990841">
    <property type="term" value="F:promoter-specific chromatin binding"/>
    <property type="evidence" value="ECO:0000250"/>
    <property type="project" value="UniProtKB"/>
</dbReference>
<dbReference type="GO" id="GO:0000978">
    <property type="term" value="F:RNA polymerase II cis-regulatory region sequence-specific DNA binding"/>
    <property type="evidence" value="ECO:0000250"/>
    <property type="project" value="UniProtKB"/>
</dbReference>
<dbReference type="GO" id="GO:0008270">
    <property type="term" value="F:zinc ion binding"/>
    <property type="evidence" value="ECO:0007669"/>
    <property type="project" value="UniProtKB-KW"/>
</dbReference>
<dbReference type="GO" id="GO:0030154">
    <property type="term" value="P:cell differentiation"/>
    <property type="evidence" value="ECO:0007669"/>
    <property type="project" value="UniProtKB-KW"/>
</dbReference>
<dbReference type="GO" id="GO:0008544">
    <property type="term" value="P:epidermis development"/>
    <property type="evidence" value="ECO:0000250"/>
    <property type="project" value="UniProtKB"/>
</dbReference>
<dbReference type="GO" id="GO:0045944">
    <property type="term" value="P:positive regulation of transcription by RNA polymerase II"/>
    <property type="evidence" value="ECO:0000250"/>
    <property type="project" value="UniProtKB"/>
</dbReference>
<dbReference type="InterPro" id="IPR039363">
    <property type="entry name" value="ZNF750"/>
</dbReference>
<dbReference type="InterPro" id="IPR039064">
    <property type="entry name" value="ZNF750_Znf"/>
</dbReference>
<dbReference type="PANTHER" id="PTHR14678">
    <property type="entry name" value="PROLINE-RICH PROTEIN 35-RELATED"/>
    <property type="match status" value="1"/>
</dbReference>
<dbReference type="PANTHER" id="PTHR14678:SF1">
    <property type="entry name" value="ZINC FINGER PROTEIN 750"/>
    <property type="match status" value="1"/>
</dbReference>
<dbReference type="Pfam" id="PF15269">
    <property type="entry name" value="zf-C2H2_7"/>
    <property type="match status" value="1"/>
</dbReference>
<organism>
    <name type="scientific">Xenopus tropicalis</name>
    <name type="common">Western clawed frog</name>
    <name type="synonym">Silurana tropicalis</name>
    <dbReference type="NCBI Taxonomy" id="8364"/>
    <lineage>
        <taxon>Eukaryota</taxon>
        <taxon>Metazoa</taxon>
        <taxon>Chordata</taxon>
        <taxon>Craniata</taxon>
        <taxon>Vertebrata</taxon>
        <taxon>Euteleostomi</taxon>
        <taxon>Amphibia</taxon>
        <taxon>Batrachia</taxon>
        <taxon>Anura</taxon>
        <taxon>Pipoidea</taxon>
        <taxon>Pipidae</taxon>
        <taxon>Xenopodinae</taxon>
        <taxon>Xenopus</taxon>
        <taxon>Silurana</taxon>
    </lineage>
</organism>
<comment type="function">
    <text evidence="1">Transcription factor involved in epidermis differentiation.</text>
</comment>
<comment type="subcellular location">
    <subcellularLocation>
        <location evidence="1">Nucleus</location>
    </subcellularLocation>
</comment>
<name>ZN750_XENTR</name>
<protein>
    <recommendedName>
        <fullName>Zinc finger protein 750</fullName>
    </recommendedName>
</protein>
<feature type="chain" id="PRO_0000247074" description="Zinc finger protein 750">
    <location>
        <begin position="1"/>
        <end position="671"/>
    </location>
</feature>
<feature type="zinc finger region" description="CCHC-type" evidence="2">
    <location>
        <begin position="25"/>
        <end position="51"/>
    </location>
</feature>
<feature type="region of interest" description="Disordered" evidence="3">
    <location>
        <begin position="66"/>
        <end position="87"/>
    </location>
</feature>
<feature type="region of interest" description="Disordered" evidence="3">
    <location>
        <begin position="366"/>
        <end position="433"/>
    </location>
</feature>
<feature type="region of interest" description="Disordered" evidence="3">
    <location>
        <begin position="592"/>
        <end position="671"/>
    </location>
</feature>
<feature type="compositionally biased region" description="Polar residues" evidence="3">
    <location>
        <begin position="67"/>
        <end position="78"/>
    </location>
</feature>
<feature type="compositionally biased region" description="Polar residues" evidence="3">
    <location>
        <begin position="402"/>
        <end position="412"/>
    </location>
</feature>
<feature type="binding site" evidence="2">
    <location>
        <position position="27"/>
    </location>
    <ligand>
        <name>Zn(2+)</name>
        <dbReference type="ChEBI" id="CHEBI:29105"/>
    </ligand>
</feature>
<feature type="binding site" evidence="2">
    <location>
        <position position="30"/>
    </location>
    <ligand>
        <name>Zn(2+)</name>
        <dbReference type="ChEBI" id="CHEBI:29105"/>
    </ligand>
</feature>
<feature type="binding site" evidence="2">
    <location>
        <position position="43"/>
    </location>
    <ligand>
        <name>Zn(2+)</name>
        <dbReference type="ChEBI" id="CHEBI:29105"/>
    </ligand>
</feature>
<feature type="binding site" evidence="2">
    <location>
        <position position="49"/>
    </location>
    <ligand>
        <name>Zn(2+)</name>
        <dbReference type="ChEBI" id="CHEBI:29105"/>
    </ligand>
</feature>
<feature type="sequence conflict" description="In Ref. 1; CAJ82741." evidence="4" ref="1">
    <original>I</original>
    <variation>M</variation>
    <location>
        <position position="513"/>
    </location>
</feature>
<evidence type="ECO:0000250" key="1"/>
<evidence type="ECO:0000250" key="2">
    <source>
        <dbReference type="UniProtKB" id="Q32MQ0"/>
    </source>
</evidence>
<evidence type="ECO:0000256" key="3">
    <source>
        <dbReference type="SAM" id="MobiDB-lite"/>
    </source>
</evidence>
<evidence type="ECO:0000305" key="4"/>
<keyword id="KW-0010">Activator</keyword>
<keyword id="KW-0221">Differentiation</keyword>
<keyword id="KW-0479">Metal-binding</keyword>
<keyword id="KW-0539">Nucleus</keyword>
<keyword id="KW-1185">Reference proteome</keyword>
<keyword id="KW-0804">Transcription</keyword>
<keyword id="KW-0805">Transcription regulation</keyword>
<keyword id="KW-0862">Zinc</keyword>
<keyword id="KW-0863">Zinc-finger</keyword>
<sequence length="671" mass="74240">MSLVKERKPKKPHYIPRPPGKPFKYKCFQCPFTCNEKSHLFNHMKYGLCKNSITVVTDQDRIVKNPKVNSTDQKQPSNEPFAKSPVPAINGLTGLESKTQHSVAREEAKENFDLKNEAKPHVEKTTVTKEVTLPPTAIIGQINKPPSLDGVMRPSAFIPVGEHRLKGTENIKIPELSSVSTEPAKGVHSIKSAFHSLPTPWKSGLVSPDFSHKSSIPRYIRPMISEYPPQFYSETGLPAVFSPYLFPQAECENPMLSVYSAPEQRPFLPHPLQASGLPLPKPINAPFEHYRLLQQFQQNPQLHYGFYRPTEHPYFSYGLKVPPVPSLSKEHTSQSVDSPTFIYPSSHPSRLYPLEGFQKLAEIQKETSPVPAKNLDSKSDSESVKMSPRAGSAATGSPGRPSPTNFTQNSQGHEGIFDLSTKSTSDKAGKDFTSGKAVRKSTDCQTTISREHSPCFRNDEIQSHSDCYSDDAAPHDSVAPLNLSKRPEVEDRAVFDTMHNSDSNDESVGFMEIQDLPLNLSVKDSGNNQKALCADERLLLPRQVTSSPNYHFIHTVDKRVPATTGVHSLGIIENCDEQKQSAAVALCQLATSSPGVPARGTEDEFSEKETVAPEQVHPRAPAAQETEADIGARGQKRTNSKEPGKSQSSNKKHKSVDSGRMFTLRKRPRVS</sequence>
<proteinExistence type="evidence at transcript level"/>